<accession>Q8YDY8</accession>
<comment type="subcellular location">
    <subcellularLocation>
        <location evidence="3">Cell outer membrane</location>
        <topology evidence="1">Lipid-anchor</topology>
    </subcellularLocation>
</comment>
<gene>
    <name type="ordered locus">BMEII0036</name>
</gene>
<evidence type="ECO:0000255" key="1">
    <source>
        <dbReference type="PROSITE-ProRule" id="PRU00303"/>
    </source>
</evidence>
<evidence type="ECO:0000255" key="2">
    <source>
        <dbReference type="PROSITE-ProRule" id="PRU00473"/>
    </source>
</evidence>
<evidence type="ECO:0000305" key="3"/>
<keyword id="KW-0998">Cell outer membrane</keyword>
<keyword id="KW-0449">Lipoprotein</keyword>
<keyword id="KW-0472">Membrane</keyword>
<keyword id="KW-0564">Palmitate</keyword>
<keyword id="KW-0732">Signal</keyword>
<keyword id="KW-0843">Virulence</keyword>
<name>YU36_BRUME</name>
<protein>
    <recommendedName>
        <fullName>Type IV secretion system putative outer membrane lipoprotein BMEII0036</fullName>
    </recommendedName>
</protein>
<dbReference type="EMBL" id="AE008918">
    <property type="protein sequence ID" value="AAL53277.1"/>
    <property type="molecule type" value="Genomic_DNA"/>
</dbReference>
<dbReference type="PIR" id="AB3514">
    <property type="entry name" value="AB3514"/>
</dbReference>
<dbReference type="RefSeq" id="WP_004681215.1">
    <property type="nucleotide sequence ID" value="NZ_GG703779.1"/>
</dbReference>
<dbReference type="SMR" id="Q8YDY8"/>
<dbReference type="GeneID" id="29596005"/>
<dbReference type="KEGG" id="bme:BMEII0036"/>
<dbReference type="KEGG" id="bmel:DK63_2083"/>
<dbReference type="PATRIC" id="fig|224914.52.peg.2184"/>
<dbReference type="eggNOG" id="COG2885">
    <property type="taxonomic scope" value="Bacteria"/>
</dbReference>
<dbReference type="PhylomeDB" id="Q8YDY8"/>
<dbReference type="Proteomes" id="UP000000419">
    <property type="component" value="Chromosome II"/>
</dbReference>
<dbReference type="GO" id="GO:0009279">
    <property type="term" value="C:cell outer membrane"/>
    <property type="evidence" value="ECO:0007669"/>
    <property type="project" value="UniProtKB-SubCell"/>
</dbReference>
<dbReference type="Gene3D" id="3.30.1330.60">
    <property type="entry name" value="OmpA-like domain"/>
    <property type="match status" value="1"/>
</dbReference>
<dbReference type="InterPro" id="IPR006665">
    <property type="entry name" value="OmpA-like"/>
</dbReference>
<dbReference type="InterPro" id="IPR036737">
    <property type="entry name" value="OmpA-like_sf"/>
</dbReference>
<dbReference type="Pfam" id="PF00691">
    <property type="entry name" value="OmpA"/>
    <property type="match status" value="1"/>
</dbReference>
<dbReference type="SUPFAM" id="SSF103088">
    <property type="entry name" value="OmpA-like"/>
    <property type="match status" value="1"/>
</dbReference>
<dbReference type="PROSITE" id="PS51123">
    <property type="entry name" value="OMPA_2"/>
    <property type="match status" value="1"/>
</dbReference>
<dbReference type="PROSITE" id="PS51257">
    <property type="entry name" value="PROKAR_LIPOPROTEIN"/>
    <property type="match status" value="1"/>
</dbReference>
<organism>
    <name type="scientific">Brucella melitensis biotype 1 (strain ATCC 23456 / CCUG 17765 / NCTC 10094 / 16M)</name>
    <dbReference type="NCBI Taxonomy" id="224914"/>
    <lineage>
        <taxon>Bacteria</taxon>
        <taxon>Pseudomonadati</taxon>
        <taxon>Pseudomonadota</taxon>
        <taxon>Alphaproteobacteria</taxon>
        <taxon>Hyphomicrobiales</taxon>
        <taxon>Brucellaceae</taxon>
        <taxon>Brucella/Ochrobactrum group</taxon>
        <taxon>Brucella</taxon>
    </lineage>
</organism>
<feature type="signal peptide" evidence="1">
    <location>
        <begin position="1"/>
        <end position="15"/>
    </location>
</feature>
<feature type="chain" id="PRO_0000291447" description="Type IV secretion system putative outer membrane lipoprotein BMEII0036">
    <location>
        <begin position="16"/>
        <end position="172"/>
    </location>
</feature>
<feature type="domain" description="OmpA-like" evidence="2">
    <location>
        <begin position="58"/>
        <end position="172"/>
    </location>
</feature>
<feature type="lipid moiety-binding region" description="N-palmitoyl cysteine" evidence="1">
    <location>
        <position position="16"/>
    </location>
</feature>
<feature type="lipid moiety-binding region" description="S-diacylglycerol cysteine" evidence="1">
    <location>
        <position position="16"/>
    </location>
</feature>
<sequence length="172" mass="19001">MRTLVMVACAVSLAACSSPPKPPTVSGRHRIPINSPAAQEELRLQVFPQEPTAQATMWPARPPKQTVNVYFPQDVTVFRPTSAQINQLHTLLWPVPKHINVRGLTDNSCPPPGDTQVARVRALAIYNWLINQGVPASRITISYAPVKDYASNAPLSPGRVLNRRVDIEILRK</sequence>
<proteinExistence type="inferred from homology"/>
<reference key="1">
    <citation type="journal article" date="2002" name="Proc. Natl. Acad. Sci. U.S.A.">
        <title>The genome sequence of the facultative intracellular pathogen Brucella melitensis.</title>
        <authorList>
            <person name="DelVecchio V.G."/>
            <person name="Kapatral V."/>
            <person name="Redkar R.J."/>
            <person name="Patra G."/>
            <person name="Mujer C."/>
            <person name="Los T."/>
            <person name="Ivanova N."/>
            <person name="Anderson I."/>
            <person name="Bhattacharyya A."/>
            <person name="Lykidis A."/>
            <person name="Reznik G."/>
            <person name="Jablonski L."/>
            <person name="Larsen N."/>
            <person name="D'Souza M."/>
            <person name="Bernal A."/>
            <person name="Mazur M."/>
            <person name="Goltsman E."/>
            <person name="Selkov E."/>
            <person name="Elzer P.H."/>
            <person name="Hagius S."/>
            <person name="O'Callaghan D."/>
            <person name="Letesson J.-J."/>
            <person name="Haselkorn R."/>
            <person name="Kyrpides N.C."/>
            <person name="Overbeek R."/>
        </authorList>
    </citation>
    <scope>NUCLEOTIDE SEQUENCE [LARGE SCALE GENOMIC DNA]</scope>
    <source>
        <strain>ATCC 23456 / CCUG 17765 / NCTC 10094 / 16M</strain>
    </source>
</reference>